<proteinExistence type="inferred from homology"/>
<protein>
    <recommendedName>
        <fullName evidence="2">Probable 4-amino-4-deoxy-L-arabinose-phosphoundecaprenol flippase subunit ArnE</fullName>
        <shortName evidence="2">L-Ara4N-phosphoundecaprenol flippase subunit ArnE</shortName>
    </recommendedName>
    <alternativeName>
        <fullName evidence="2">Undecaprenyl phosphate-aminoarabinose flippase subunit ArnE</fullName>
    </alternativeName>
</protein>
<comment type="function">
    <text evidence="2">Translocates 4-amino-4-deoxy-L-arabinose-phosphoundecaprenol (alpha-L-Ara4N-phosphoundecaprenol) from the cytoplasmic to the periplasmic side of the inner membrane.</text>
</comment>
<comment type="pathway">
    <text evidence="2">Bacterial outer membrane biogenesis; lipopolysaccharide biosynthesis.</text>
</comment>
<comment type="subunit">
    <text evidence="2">Heterodimer of ArnE and ArnF.</text>
</comment>
<comment type="subcellular location">
    <subcellularLocation>
        <location evidence="2">Cell inner membrane</location>
        <topology evidence="2">Multi-pass membrane protein</topology>
    </subcellularLocation>
</comment>
<comment type="similarity">
    <text evidence="2">Belongs to the ArnE family.</text>
</comment>
<gene>
    <name evidence="2" type="primary">arnE</name>
    <name type="ordered locus">UTI89_C2540</name>
</gene>
<accession>Q1R9F7</accession>
<keyword id="KW-0997">Cell inner membrane</keyword>
<keyword id="KW-1003">Cell membrane</keyword>
<keyword id="KW-0441">Lipid A biosynthesis</keyword>
<keyword id="KW-0444">Lipid biosynthesis</keyword>
<keyword id="KW-0443">Lipid metabolism</keyword>
<keyword id="KW-0448">Lipopolysaccharide biosynthesis</keyword>
<keyword id="KW-0472">Membrane</keyword>
<keyword id="KW-0812">Transmembrane</keyword>
<keyword id="KW-1133">Transmembrane helix</keyword>
<keyword id="KW-0813">Transport</keyword>
<organism>
    <name type="scientific">Escherichia coli (strain UTI89 / UPEC)</name>
    <dbReference type="NCBI Taxonomy" id="364106"/>
    <lineage>
        <taxon>Bacteria</taxon>
        <taxon>Pseudomonadati</taxon>
        <taxon>Pseudomonadota</taxon>
        <taxon>Gammaproteobacteria</taxon>
        <taxon>Enterobacterales</taxon>
        <taxon>Enterobacteriaceae</taxon>
        <taxon>Escherichia</taxon>
    </lineage>
</organism>
<dbReference type="EMBL" id="CP000243">
    <property type="protein sequence ID" value="ABE08007.1"/>
    <property type="molecule type" value="Genomic_DNA"/>
</dbReference>
<dbReference type="RefSeq" id="WP_000638016.1">
    <property type="nucleotide sequence ID" value="NZ_CP064825.1"/>
</dbReference>
<dbReference type="SMR" id="Q1R9F7"/>
<dbReference type="KEGG" id="eci:UTI89_C2540"/>
<dbReference type="HOGENOM" id="CLU_131462_5_1_6"/>
<dbReference type="UniPathway" id="UPA00030"/>
<dbReference type="Proteomes" id="UP000001952">
    <property type="component" value="Chromosome"/>
</dbReference>
<dbReference type="GO" id="GO:0005886">
    <property type="term" value="C:plasma membrane"/>
    <property type="evidence" value="ECO:0007669"/>
    <property type="project" value="UniProtKB-SubCell"/>
</dbReference>
<dbReference type="GO" id="GO:1901505">
    <property type="term" value="F:carbohydrate derivative transmembrane transporter activity"/>
    <property type="evidence" value="ECO:0007669"/>
    <property type="project" value="InterPro"/>
</dbReference>
<dbReference type="GO" id="GO:0009245">
    <property type="term" value="P:lipid A biosynthetic process"/>
    <property type="evidence" value="ECO:0007669"/>
    <property type="project" value="UniProtKB-UniRule"/>
</dbReference>
<dbReference type="GO" id="GO:0009103">
    <property type="term" value="P:lipopolysaccharide biosynthetic process"/>
    <property type="evidence" value="ECO:0007669"/>
    <property type="project" value="UniProtKB-UniRule"/>
</dbReference>
<dbReference type="FunFam" id="1.10.3730.20:FF:000002">
    <property type="entry name" value="Probable 4-amino-4-deoxy-L-arabinose-phosphoundecaprenol flippase subunit ArnE"/>
    <property type="match status" value="1"/>
</dbReference>
<dbReference type="Gene3D" id="1.10.3730.20">
    <property type="match status" value="1"/>
</dbReference>
<dbReference type="HAMAP" id="MF_01869">
    <property type="entry name" value="Flippase_ArnE"/>
    <property type="match status" value="1"/>
</dbReference>
<dbReference type="InterPro" id="IPR000620">
    <property type="entry name" value="EamA_dom"/>
</dbReference>
<dbReference type="InterPro" id="IPR022883">
    <property type="entry name" value="Flippase_ArnE"/>
</dbReference>
<dbReference type="InterPro" id="IPR000390">
    <property type="entry name" value="Small_drug/metabolite_transptr"/>
</dbReference>
<dbReference type="NCBIfam" id="NF011625">
    <property type="entry name" value="PRK15051.1"/>
    <property type="match status" value="1"/>
</dbReference>
<dbReference type="PANTHER" id="PTHR30561:SF23">
    <property type="entry name" value="4-AMINO-4-DEOXY-L-ARABINOSE-PHOSPHOUNDECAPRENOL FLIPPASE SUBUNIT ARNE-RELATED"/>
    <property type="match status" value="1"/>
</dbReference>
<dbReference type="PANTHER" id="PTHR30561">
    <property type="entry name" value="SMR FAMILY PROTON-DEPENDENT DRUG EFFLUX TRANSPORTER SUGE"/>
    <property type="match status" value="1"/>
</dbReference>
<dbReference type="Pfam" id="PF00892">
    <property type="entry name" value="EamA"/>
    <property type="match status" value="1"/>
</dbReference>
<dbReference type="SUPFAM" id="SSF103481">
    <property type="entry name" value="Multidrug resistance efflux transporter EmrE"/>
    <property type="match status" value="1"/>
</dbReference>
<reference key="1">
    <citation type="journal article" date="2006" name="Proc. Natl. Acad. Sci. U.S.A.">
        <title>Identification of genes subject to positive selection in uropathogenic strains of Escherichia coli: a comparative genomics approach.</title>
        <authorList>
            <person name="Chen S.L."/>
            <person name="Hung C.-S."/>
            <person name="Xu J."/>
            <person name="Reigstad C.S."/>
            <person name="Magrini V."/>
            <person name="Sabo A."/>
            <person name="Blasiar D."/>
            <person name="Bieri T."/>
            <person name="Meyer R.R."/>
            <person name="Ozersky P."/>
            <person name="Armstrong J.R."/>
            <person name="Fulton R.S."/>
            <person name="Latreille J.P."/>
            <person name="Spieth J."/>
            <person name="Hooton T.M."/>
            <person name="Mardis E.R."/>
            <person name="Hultgren S.J."/>
            <person name="Gordon J.I."/>
        </authorList>
    </citation>
    <scope>NUCLEOTIDE SEQUENCE [LARGE SCALE GENOMIC DNA]</scope>
    <source>
        <strain>UTI89 / UPEC</strain>
    </source>
</reference>
<feature type="chain" id="PRO_0000382961" description="Probable 4-amino-4-deoxy-L-arabinose-phosphoundecaprenol flippase subunit ArnE">
    <location>
        <begin position="1"/>
        <end position="111"/>
    </location>
</feature>
<feature type="topological domain" description="Cytoplasmic" evidence="1">
    <location>
        <begin position="1"/>
        <end position="35"/>
    </location>
</feature>
<feature type="transmembrane region" description="Helical" evidence="2">
    <location>
        <begin position="36"/>
        <end position="56"/>
    </location>
</feature>
<feature type="topological domain" description="Periplasmic" evidence="1">
    <location>
        <begin position="57"/>
        <end position="60"/>
    </location>
</feature>
<feature type="transmembrane region" description="Helical" evidence="2">
    <location>
        <begin position="61"/>
        <end position="81"/>
    </location>
</feature>
<feature type="topological domain" description="Cytoplasmic" evidence="1">
    <location>
        <begin position="82"/>
        <end position="87"/>
    </location>
</feature>
<feature type="transmembrane region" description="Helical" evidence="2">
    <location>
        <begin position="88"/>
        <end position="108"/>
    </location>
</feature>
<feature type="topological domain" description="Periplasmic" evidence="1">
    <location>
        <begin position="109"/>
        <end position="111"/>
    </location>
</feature>
<feature type="domain" description="EamA" evidence="2">
    <location>
        <begin position="40"/>
        <end position="109"/>
    </location>
</feature>
<name>ARNE_ECOUT</name>
<sequence>MIWLTLVFASLLSVAGQLCQKQATCFAAVNKRRKHIVLWLGLALACLGLAMVLWLLVLQNVPVGIAYPMLSLNFVWVTLAAVKLWHEPVSLRHWCGVAFIIGGIVILGSTV</sequence>
<evidence type="ECO:0000255" key="1"/>
<evidence type="ECO:0000255" key="2">
    <source>
        <dbReference type="HAMAP-Rule" id="MF_01869"/>
    </source>
</evidence>